<name>HSP90_CAEEL</name>
<gene>
    <name evidence="12" type="primary">hsp-90</name>
    <name evidence="12" type="synonym">daf-21</name>
    <name type="ORF">C47E8.5</name>
</gene>
<feature type="chain" id="PRO_0000233901" description="Heat shock protein 90">
    <location>
        <begin position="1"/>
        <end position="702"/>
    </location>
</feature>
<feature type="region of interest" description="Disordered" evidence="3">
    <location>
        <begin position="218"/>
        <end position="239"/>
    </location>
</feature>
<feature type="region of interest" description="Disordered" evidence="3">
    <location>
        <begin position="676"/>
        <end position="702"/>
    </location>
</feature>
<feature type="short sequence motif" description="TPR repeat-binding">
    <location>
        <begin position="698"/>
        <end position="702"/>
    </location>
</feature>
<feature type="compositionally biased region" description="Basic and acidic residues" evidence="3">
    <location>
        <begin position="224"/>
        <end position="235"/>
    </location>
</feature>
<feature type="compositionally biased region" description="Basic and acidic residues" evidence="3">
    <location>
        <begin position="686"/>
        <end position="702"/>
    </location>
</feature>
<feature type="binding site" evidence="1">
    <location>
        <position position="39"/>
    </location>
    <ligand>
        <name>ATP</name>
        <dbReference type="ChEBI" id="CHEBI:30616"/>
    </ligand>
</feature>
<feature type="binding site" evidence="1">
    <location>
        <position position="81"/>
    </location>
    <ligand>
        <name>ATP</name>
        <dbReference type="ChEBI" id="CHEBI:30616"/>
    </ligand>
</feature>
<feature type="binding site" evidence="1">
    <location>
        <position position="100"/>
    </location>
    <ligand>
        <name>ATP</name>
        <dbReference type="ChEBI" id="CHEBI:30616"/>
    </ligand>
</feature>
<feature type="binding site" evidence="1">
    <location>
        <position position="126"/>
    </location>
    <ligand>
        <name>ATP</name>
        <dbReference type="ChEBI" id="CHEBI:30616"/>
    </ligand>
</feature>
<feature type="binding site" evidence="1">
    <location>
        <position position="371"/>
    </location>
    <ligand>
        <name>ATP</name>
        <dbReference type="ChEBI" id="CHEBI:30616"/>
    </ligand>
</feature>
<feature type="mutagenesis site" description="Specific sensory defects and reduced fertility." evidence="4">
    <original>E</original>
    <variation>K</variation>
    <location>
        <position position="292"/>
    </location>
</feature>
<feature type="strand" evidence="13">
    <location>
        <begin position="6"/>
        <end position="9"/>
    </location>
</feature>
<feature type="helix" evidence="13">
    <location>
        <begin position="12"/>
        <end position="23"/>
    </location>
</feature>
<feature type="helix" evidence="13">
    <location>
        <begin position="31"/>
        <end position="51"/>
    </location>
</feature>
<feature type="helix" evidence="13">
    <location>
        <begin position="55"/>
        <end position="60"/>
    </location>
</feature>
<feature type="strand" evidence="13">
    <location>
        <begin position="66"/>
        <end position="71"/>
    </location>
</feature>
<feature type="turn" evidence="13">
    <location>
        <begin position="72"/>
        <end position="75"/>
    </location>
</feature>
<feature type="strand" evidence="13">
    <location>
        <begin position="76"/>
        <end position="81"/>
    </location>
</feature>
<feature type="helix" evidence="13">
    <location>
        <begin position="88"/>
        <end position="94"/>
    </location>
</feature>
<feature type="turn" evidence="13">
    <location>
        <begin position="95"/>
        <end position="97"/>
    </location>
</feature>
<feature type="helix" evidence="13">
    <location>
        <begin position="103"/>
        <end position="111"/>
    </location>
</feature>
<feature type="helix" evidence="13">
    <location>
        <begin position="116"/>
        <end position="122"/>
    </location>
</feature>
<feature type="helix" evidence="13">
    <location>
        <begin position="125"/>
        <end position="131"/>
    </location>
</feature>
<feature type="strand" evidence="13">
    <location>
        <begin position="133"/>
        <end position="141"/>
    </location>
</feature>
<feature type="strand" evidence="13">
    <location>
        <begin position="148"/>
        <end position="152"/>
    </location>
</feature>
<feature type="strand" evidence="13">
    <location>
        <begin position="157"/>
        <end position="162"/>
    </location>
</feature>
<feature type="strand" evidence="13">
    <location>
        <begin position="169"/>
        <end position="178"/>
    </location>
</feature>
<feature type="helix" evidence="13">
    <location>
        <begin position="180"/>
        <end position="186"/>
    </location>
</feature>
<feature type="helix" evidence="13">
    <location>
        <begin position="188"/>
        <end position="198"/>
    </location>
</feature>
<feature type="strand" evidence="13">
    <location>
        <begin position="206"/>
        <end position="208"/>
    </location>
</feature>
<protein>
    <recommendedName>
        <fullName>Heat shock protein 90</fullName>
    </recommendedName>
    <alternativeName>
        <fullName>Abnormal dauer formation protein 21</fullName>
    </alternativeName>
</protein>
<accession>Q18688</accession>
<comment type="function">
    <text evidence="4 6 7 10 11">Molecular chaperone that promotes the maturation, structural maintenance and proper regulation of specific target proteins involved for instance in cell cycle control and signal transduction. Undergoes a functional cycle that is linked to its ATPase activity. This cycle probably induces conformational changes in the client proteins, thereby causing their activation. Interacts dynamically with various co-chaperones that modulate its substrate recognition, ATPase cycle and chaperone function. In response to cellular stress, up-regulated in distal tissues in a pqm-1-dependent manner, preventing protein misfolding and maintaining proteostasis (PubMed:29949773). By stabilizing the receptor-type guanylate cyclase daf-11 or another signal transduction component that regulates cGMP levels, plays a role in dauer formation and chemotaxis to non-volatile and volatile attractants detected by AWC sensory neurons (PubMed:10790386, PubMed:7828815). Participates in the control of cell cycle progression at the prophase/metaphase transition in oocyte development by ensuring the activity of wee-1.3 kinase, which negatively regulates cdk-1 through its phosphorylation (PubMed:16466390). Regulates yap-1 nuclear export after heat shock treatment (PubMed:23396260).</text>
</comment>
<comment type="subunit">
    <text evidence="8 9">Homodimer (PubMed:26593036). Interacts (via TPR repeat-binding and central region) with pph-5 (via phosphatase domain); the interaction promotes pph-5 phosphatase activity (PubMed:26593036). Interacts (via central region) with co-chaperone cdc-37 (via N-terminus); the interaction inhibits daf-21 ATPase activity (PubMed:23569206).</text>
</comment>
<comment type="interaction">
    <interactant intactId="EBI-313329">
        <id>Q18688</id>
    </interactant>
    <interactant intactId="EBI-360236">
        <id>P20792</id>
        <label>daf-1</label>
    </interactant>
    <organismsDiffer>false</organismsDiffer>
    <experiments>2</experiments>
</comment>
<comment type="interaction">
    <interactant intactId="EBI-313329">
        <id>Q18688</id>
    </interactant>
    <interactant intactId="EBI-313329">
        <id>Q18688</id>
        <label>daf-21</label>
    </interactant>
    <organismsDiffer>false</organismsDiffer>
    <experiments>3</experiments>
</comment>
<comment type="interaction">
    <interactant intactId="EBI-313329">
        <id>Q18688</id>
    </interactant>
    <interactant intactId="EBI-3843983">
        <id>Q11184</id>
        <label>let-756</label>
    </interactant>
    <organismsDiffer>false</organismsDiffer>
    <experiments>3</experiments>
</comment>
<comment type="interaction">
    <interactant intactId="EBI-313329">
        <id>Q18688</id>
    </interactant>
    <interactant intactId="EBI-6514174">
        <id>O16259</id>
        <label>sti-1</label>
    </interactant>
    <organismsDiffer>false</organismsDiffer>
    <experiments>3</experiments>
</comment>
<comment type="interaction">
    <interactant intactId="EBI-313329">
        <id>Q18688</id>
    </interactant>
    <interactant intactId="EBI-6675165">
        <id>G5EG62</id>
        <label>unc-45</label>
    </interactant>
    <organismsDiffer>false</organismsDiffer>
    <experiments>5</experiments>
</comment>
<comment type="subcellular location">
    <subcellularLocation>
        <location evidence="5">Cytoplasm</location>
        <location evidence="5">Perinuclear region</location>
    </subcellularLocation>
    <text>Perinuclear region of somatic cells.</text>
</comment>
<comment type="tissue specificity">
    <text evidence="5">In the embryo comma stage, expression is strongly detected in cells of the head region and less so in other areas. In early larvae, expressed in postembryonic germ cells derived from Z2 and Z3 cells and the head region, in both hermaphrodites and males. Under heat stress conditions, larval expression is not only detected in germ cells, but also all over the body. In adult hermaphrodites, expression is localized uniquely in the germ cells.</text>
</comment>
<comment type="developmental stage">
    <text evidence="4">Highly expressed throughout development.</text>
</comment>
<comment type="induction">
    <text evidence="10">Induced by heat-stress.</text>
</comment>
<comment type="domain">
    <text evidence="1">The TPR repeat-binding motif mediates interaction with TPR repeat-containing proteins.</text>
</comment>
<comment type="similarity">
    <text evidence="2">Belongs to the heat shock protein 90 family.</text>
</comment>
<dbReference type="EMBL" id="BX284605">
    <property type="protein sequence ID" value="CAA99793.1"/>
    <property type="molecule type" value="Genomic_DNA"/>
</dbReference>
<dbReference type="PIR" id="T20019">
    <property type="entry name" value="T20019"/>
</dbReference>
<dbReference type="RefSeq" id="NP_506626.1">
    <property type="nucleotide sequence ID" value="NM_074225.7"/>
</dbReference>
<dbReference type="PDB" id="4GQT">
    <property type="method" value="X-ray"/>
    <property type="resolution" value="2.15 A"/>
    <property type="chains" value="A/B=1-224"/>
</dbReference>
<dbReference type="PDB" id="4I2Z">
    <property type="method" value="X-ray"/>
    <property type="resolution" value="2.90 A"/>
    <property type="chains" value="B=693-702"/>
</dbReference>
<dbReference type="PDBsum" id="4GQT"/>
<dbReference type="PDBsum" id="4I2Z"/>
<dbReference type="SMR" id="Q18688"/>
<dbReference type="BioGRID" id="44973">
    <property type="interactions" value="117"/>
</dbReference>
<dbReference type="ComplexPortal" id="CPX-3983">
    <property type="entry name" value="Hsp90-cdc-37-pph-5 phosphatase complex"/>
</dbReference>
<dbReference type="ComplexPortal" id="CPX-3984">
    <property type="entry name" value="Hsp90-Cdc37 chaperone complex"/>
</dbReference>
<dbReference type="ComplexPortal" id="CPX-4002">
    <property type="entry name" value="Hsp90-cdc-37-aha-1 complex"/>
</dbReference>
<dbReference type="ComplexPortal" id="CPX-4003">
    <property type="entry name" value="Hsp90-sti-1 chaperone complex"/>
</dbReference>
<dbReference type="ComplexPortal" id="CPX-4004">
    <property type="entry name" value="Hsp90-daf-41 chaperone complex"/>
</dbReference>
<dbReference type="DIP" id="DIP-25037N"/>
<dbReference type="FunCoup" id="Q18688">
    <property type="interactions" value="2124"/>
</dbReference>
<dbReference type="IntAct" id="Q18688">
    <property type="interactions" value="16"/>
</dbReference>
<dbReference type="MINT" id="Q18688"/>
<dbReference type="STRING" id="6239.C47E8.5.3"/>
<dbReference type="iPTMnet" id="Q18688"/>
<dbReference type="PaxDb" id="6239-C47E8.5.2"/>
<dbReference type="PeptideAtlas" id="Q18688"/>
<dbReference type="EnsemblMetazoa" id="C47E8.5.1">
    <property type="protein sequence ID" value="C47E8.5.1"/>
    <property type="gene ID" value="WBGene00000915"/>
</dbReference>
<dbReference type="EnsemblMetazoa" id="C47E8.5.2">
    <property type="protein sequence ID" value="C47E8.5.2"/>
    <property type="gene ID" value="WBGene00000915"/>
</dbReference>
<dbReference type="GeneID" id="179971"/>
<dbReference type="KEGG" id="cel:CELE_C47E8.5"/>
<dbReference type="UCSC" id="C47E8.5.1">
    <property type="organism name" value="c. elegans"/>
</dbReference>
<dbReference type="AGR" id="WB:WBGene00000915"/>
<dbReference type="CTD" id="179971"/>
<dbReference type="WormBase" id="C47E8.5">
    <property type="protein sequence ID" value="CE05441"/>
    <property type="gene ID" value="WBGene00000915"/>
    <property type="gene designation" value="hsp-90"/>
</dbReference>
<dbReference type="eggNOG" id="KOG0019">
    <property type="taxonomic scope" value="Eukaryota"/>
</dbReference>
<dbReference type="GeneTree" id="ENSGT01020000230401"/>
<dbReference type="HOGENOM" id="CLU_006684_1_3_1"/>
<dbReference type="InParanoid" id="Q18688"/>
<dbReference type="OMA" id="MRRMKEM"/>
<dbReference type="OrthoDB" id="5426351at2759"/>
<dbReference type="PhylomeDB" id="Q18688"/>
<dbReference type="Reactome" id="R-CEL-1227986">
    <property type="pathway name" value="Signaling by ERBB2"/>
</dbReference>
<dbReference type="Reactome" id="R-CEL-1474151">
    <property type="pathway name" value="Tetrahydrobiopterin (BH4) synthesis, recycling, salvage and regulation"/>
</dbReference>
<dbReference type="Reactome" id="R-CEL-203615">
    <property type="pathway name" value="eNOS activation"/>
</dbReference>
<dbReference type="Reactome" id="R-CEL-3371497">
    <property type="pathway name" value="HSP90 chaperone cycle for steroid hormone receptors (SHR) in the presence of ligand"/>
</dbReference>
<dbReference type="Reactome" id="R-CEL-3371511">
    <property type="pathway name" value="HSF1 activation"/>
</dbReference>
<dbReference type="Reactome" id="R-CEL-3371571">
    <property type="pathway name" value="HSF1-dependent transactivation"/>
</dbReference>
<dbReference type="Reactome" id="R-CEL-5218920">
    <property type="pathway name" value="VEGFR2 mediated vascular permeability"/>
</dbReference>
<dbReference type="Reactome" id="R-CEL-6798695">
    <property type="pathway name" value="Neutrophil degranulation"/>
</dbReference>
<dbReference type="Reactome" id="R-CEL-8863795">
    <property type="pathway name" value="Downregulation of ERBB2 signaling"/>
</dbReference>
<dbReference type="Reactome" id="R-CEL-8937144">
    <property type="pathway name" value="Aryl hydrocarbon receptor signalling"/>
</dbReference>
<dbReference type="Reactome" id="R-CEL-9009391">
    <property type="pathway name" value="Extra-nuclear estrogen signaling"/>
</dbReference>
<dbReference type="Reactome" id="R-CEL-9652282">
    <property type="pathway name" value="Drug-mediated inhibition of ERBB2 signaling"/>
</dbReference>
<dbReference type="SignaLink" id="Q18688"/>
<dbReference type="EvolutionaryTrace" id="Q18688"/>
<dbReference type="PRO" id="PR:Q18688"/>
<dbReference type="Proteomes" id="UP000001940">
    <property type="component" value="Chromosome V"/>
</dbReference>
<dbReference type="Bgee" id="WBGene00000915">
    <property type="expression patterns" value="Expressed in germ line (C elegans) and 10 other cell types or tissues"/>
</dbReference>
<dbReference type="GO" id="GO:0005737">
    <property type="term" value="C:cytoplasm"/>
    <property type="evidence" value="ECO:0000314"/>
    <property type="project" value="WormBase"/>
</dbReference>
<dbReference type="GO" id="GO:0005829">
    <property type="term" value="C:cytosol"/>
    <property type="evidence" value="ECO:0000318"/>
    <property type="project" value="GO_Central"/>
</dbReference>
<dbReference type="GO" id="GO:1990565">
    <property type="term" value="C:HSP90-CDC37 chaperone complex"/>
    <property type="evidence" value="ECO:0000314"/>
    <property type="project" value="ComplexPortal"/>
</dbReference>
<dbReference type="GO" id="GO:0045121">
    <property type="term" value="C:membrane raft"/>
    <property type="evidence" value="ECO:0007005"/>
    <property type="project" value="WormBase"/>
</dbReference>
<dbReference type="GO" id="GO:0048471">
    <property type="term" value="C:perinuclear region of cytoplasm"/>
    <property type="evidence" value="ECO:0000314"/>
    <property type="project" value="WormBase"/>
</dbReference>
<dbReference type="GO" id="GO:0005886">
    <property type="term" value="C:plasma membrane"/>
    <property type="evidence" value="ECO:0000318"/>
    <property type="project" value="GO_Central"/>
</dbReference>
<dbReference type="GO" id="GO:0101031">
    <property type="term" value="C:protein folding chaperone complex"/>
    <property type="evidence" value="ECO:0000314"/>
    <property type="project" value="ComplexPortal"/>
</dbReference>
<dbReference type="GO" id="GO:0008287">
    <property type="term" value="C:protein serine/threonine phosphatase complex"/>
    <property type="evidence" value="ECO:0000303"/>
    <property type="project" value="ComplexPortal"/>
</dbReference>
<dbReference type="GO" id="GO:0032991">
    <property type="term" value="C:protein-containing complex"/>
    <property type="evidence" value="ECO:0000314"/>
    <property type="project" value="UniProtKB"/>
</dbReference>
<dbReference type="GO" id="GO:0005524">
    <property type="term" value="F:ATP binding"/>
    <property type="evidence" value="ECO:0000318"/>
    <property type="project" value="GO_Central"/>
</dbReference>
<dbReference type="GO" id="GO:0016887">
    <property type="term" value="F:ATP hydrolysis activity"/>
    <property type="evidence" value="ECO:0000314"/>
    <property type="project" value="WormBase"/>
</dbReference>
<dbReference type="GO" id="GO:0140662">
    <property type="term" value="F:ATP-dependent protein folding chaperone"/>
    <property type="evidence" value="ECO:0007669"/>
    <property type="project" value="InterPro"/>
</dbReference>
<dbReference type="GO" id="GO:0042802">
    <property type="term" value="F:identical protein binding"/>
    <property type="evidence" value="ECO:0000353"/>
    <property type="project" value="IntAct"/>
</dbReference>
<dbReference type="GO" id="GO:0035259">
    <property type="term" value="F:nuclear glucocorticoid receptor binding"/>
    <property type="evidence" value="ECO:0000353"/>
    <property type="project" value="UniProtKB"/>
</dbReference>
<dbReference type="GO" id="GO:1990634">
    <property type="term" value="F:protein phosphatase 5 binding"/>
    <property type="evidence" value="ECO:0000353"/>
    <property type="project" value="UniProtKB"/>
</dbReference>
<dbReference type="GO" id="GO:0072542">
    <property type="term" value="F:protein phosphatase activator activity"/>
    <property type="evidence" value="ECO:0000314"/>
    <property type="project" value="UniProtKB"/>
</dbReference>
<dbReference type="GO" id="GO:0051082">
    <property type="term" value="F:unfolded protein binding"/>
    <property type="evidence" value="ECO:0000318"/>
    <property type="project" value="GO_Central"/>
</dbReference>
<dbReference type="GO" id="GO:0034605">
    <property type="term" value="P:cellular response to heat"/>
    <property type="evidence" value="ECO:0000315"/>
    <property type="project" value="UniProtKB"/>
</dbReference>
<dbReference type="GO" id="GO:0061077">
    <property type="term" value="P:chaperone-mediated protein folding"/>
    <property type="evidence" value="ECO:0000314"/>
    <property type="project" value="WormBase"/>
</dbReference>
<dbReference type="GO" id="GO:0006935">
    <property type="term" value="P:chemotaxis"/>
    <property type="evidence" value="ECO:0000316"/>
    <property type="project" value="UniProtKB"/>
</dbReference>
<dbReference type="GO" id="GO:0040024">
    <property type="term" value="P:dauer larval development"/>
    <property type="evidence" value="ECO:0000315"/>
    <property type="project" value="WormBase"/>
</dbReference>
<dbReference type="GO" id="GO:0050829">
    <property type="term" value="P:defense response to Gram-negative bacterium"/>
    <property type="evidence" value="ECO:0000316"/>
    <property type="project" value="UniProtKB"/>
</dbReference>
<dbReference type="GO" id="GO:0008340">
    <property type="term" value="P:determination of adult lifespan"/>
    <property type="evidence" value="ECO:0000316"/>
    <property type="project" value="WormBase"/>
</dbReference>
<dbReference type="GO" id="GO:0002119">
    <property type="term" value="P:nematode larval development"/>
    <property type="evidence" value="ECO:0000315"/>
    <property type="project" value="WormBase"/>
</dbReference>
<dbReference type="GO" id="GO:0006611">
    <property type="term" value="P:protein export from nucleus"/>
    <property type="evidence" value="ECO:0000315"/>
    <property type="project" value="WormBase"/>
</dbReference>
<dbReference type="GO" id="GO:0006457">
    <property type="term" value="P:protein folding"/>
    <property type="evidence" value="ECO:0000318"/>
    <property type="project" value="GO_Central"/>
</dbReference>
<dbReference type="GO" id="GO:0050821">
    <property type="term" value="P:protein stabilization"/>
    <property type="evidence" value="ECO:0000315"/>
    <property type="project" value="UniProtKB"/>
</dbReference>
<dbReference type="GO" id="GO:0050920">
    <property type="term" value="P:regulation of chemotaxis"/>
    <property type="evidence" value="ECO:0000315"/>
    <property type="project" value="UniProtKB"/>
</dbReference>
<dbReference type="GO" id="GO:0009408">
    <property type="term" value="P:response to heat"/>
    <property type="evidence" value="ECO:0000316"/>
    <property type="project" value="UniProtKB"/>
</dbReference>
<dbReference type="CDD" id="cd16927">
    <property type="entry name" value="HATPase_Hsp90-like"/>
    <property type="match status" value="1"/>
</dbReference>
<dbReference type="FunFam" id="1.20.120.790:FF:000001">
    <property type="entry name" value="Heat shock protein 90 alpha"/>
    <property type="match status" value="1"/>
</dbReference>
<dbReference type="FunFam" id="3.30.230.80:FF:000001">
    <property type="entry name" value="Heat shock protein 90 alpha"/>
    <property type="match status" value="1"/>
</dbReference>
<dbReference type="FunFam" id="3.40.50.11260:FF:000001">
    <property type="entry name" value="Heat shock protein 90 alpha"/>
    <property type="match status" value="1"/>
</dbReference>
<dbReference type="FunFam" id="3.30.565.10:FF:000001">
    <property type="entry name" value="Heat shock protein HSP 90-alpha"/>
    <property type="match status" value="1"/>
</dbReference>
<dbReference type="Gene3D" id="3.30.230.80">
    <property type="match status" value="1"/>
</dbReference>
<dbReference type="Gene3D" id="3.40.50.11260">
    <property type="match status" value="1"/>
</dbReference>
<dbReference type="Gene3D" id="1.20.120.790">
    <property type="entry name" value="Heat shock protein 90, C-terminal domain"/>
    <property type="match status" value="1"/>
</dbReference>
<dbReference type="Gene3D" id="3.30.565.10">
    <property type="entry name" value="Histidine kinase-like ATPase, C-terminal domain"/>
    <property type="match status" value="1"/>
</dbReference>
<dbReference type="HAMAP" id="MF_00505">
    <property type="entry name" value="HSP90"/>
    <property type="match status" value="1"/>
</dbReference>
<dbReference type="InterPro" id="IPR036890">
    <property type="entry name" value="HATPase_C_sf"/>
</dbReference>
<dbReference type="InterPro" id="IPR037196">
    <property type="entry name" value="HSP90_C"/>
</dbReference>
<dbReference type="InterPro" id="IPR001404">
    <property type="entry name" value="Hsp90_fam"/>
</dbReference>
<dbReference type="InterPro" id="IPR020575">
    <property type="entry name" value="Hsp90_N"/>
</dbReference>
<dbReference type="InterPro" id="IPR020568">
    <property type="entry name" value="Ribosomal_Su5_D2-typ_SF"/>
</dbReference>
<dbReference type="NCBIfam" id="NF003555">
    <property type="entry name" value="PRK05218.1"/>
    <property type="match status" value="1"/>
</dbReference>
<dbReference type="PANTHER" id="PTHR11528">
    <property type="entry name" value="HEAT SHOCK PROTEIN 90 FAMILY MEMBER"/>
    <property type="match status" value="1"/>
</dbReference>
<dbReference type="Pfam" id="PF13589">
    <property type="entry name" value="HATPase_c_3"/>
    <property type="match status" value="1"/>
</dbReference>
<dbReference type="Pfam" id="PF00183">
    <property type="entry name" value="HSP90"/>
    <property type="match status" value="1"/>
</dbReference>
<dbReference type="PIRSF" id="PIRSF002583">
    <property type="entry name" value="Hsp90"/>
    <property type="match status" value="1"/>
</dbReference>
<dbReference type="PRINTS" id="PR00775">
    <property type="entry name" value="HEATSHOCK90"/>
</dbReference>
<dbReference type="SMART" id="SM00387">
    <property type="entry name" value="HATPase_c"/>
    <property type="match status" value="1"/>
</dbReference>
<dbReference type="SUPFAM" id="SSF55874">
    <property type="entry name" value="ATPase domain of HSP90 chaperone/DNA topoisomerase II/histidine kinase"/>
    <property type="match status" value="1"/>
</dbReference>
<dbReference type="SUPFAM" id="SSF110942">
    <property type="entry name" value="HSP90 C-terminal domain"/>
    <property type="match status" value="1"/>
</dbReference>
<dbReference type="SUPFAM" id="SSF54211">
    <property type="entry name" value="Ribosomal protein S5 domain 2-like"/>
    <property type="match status" value="1"/>
</dbReference>
<organism>
    <name type="scientific">Caenorhabditis elegans</name>
    <dbReference type="NCBI Taxonomy" id="6239"/>
    <lineage>
        <taxon>Eukaryota</taxon>
        <taxon>Metazoa</taxon>
        <taxon>Ecdysozoa</taxon>
        <taxon>Nematoda</taxon>
        <taxon>Chromadorea</taxon>
        <taxon>Rhabditida</taxon>
        <taxon>Rhabditina</taxon>
        <taxon>Rhabditomorpha</taxon>
        <taxon>Rhabditoidea</taxon>
        <taxon>Rhabditidae</taxon>
        <taxon>Peloderinae</taxon>
        <taxon>Caenorhabditis</taxon>
    </lineage>
</organism>
<evidence type="ECO:0000250" key="1"/>
<evidence type="ECO:0000255" key="2"/>
<evidence type="ECO:0000256" key="3">
    <source>
        <dbReference type="SAM" id="MobiDB-lite"/>
    </source>
</evidence>
<evidence type="ECO:0000269" key="4">
    <source>
    </source>
</evidence>
<evidence type="ECO:0000269" key="5">
    <source>
    </source>
</evidence>
<evidence type="ECO:0000269" key="6">
    <source>
    </source>
</evidence>
<evidence type="ECO:0000269" key="7">
    <source>
    </source>
</evidence>
<evidence type="ECO:0000269" key="8">
    <source>
    </source>
</evidence>
<evidence type="ECO:0000269" key="9">
    <source>
    </source>
</evidence>
<evidence type="ECO:0000269" key="10">
    <source>
    </source>
</evidence>
<evidence type="ECO:0000269" key="11">
    <source>
    </source>
</evidence>
<evidence type="ECO:0000312" key="12">
    <source>
        <dbReference type="EMBL" id="CAA99793.1"/>
    </source>
</evidence>
<evidence type="ECO:0007829" key="13">
    <source>
        <dbReference type="PDB" id="4GQT"/>
    </source>
</evidence>
<reference evidence="12" key="1">
    <citation type="journal article" date="1998" name="Science">
        <title>Genome sequence of the nematode C. elegans: a platform for investigating biology.</title>
        <authorList>
            <consortium name="The C. elegans sequencing consortium"/>
        </authorList>
    </citation>
    <scope>NUCLEOTIDE SEQUENCE [LARGE SCALE GENOMIC DNA]</scope>
    <source>
        <strain evidence="12">Bristol N2</strain>
    </source>
</reference>
<reference key="2">
    <citation type="submission" date="2006-03" db="UniProtKB">
        <authorList>
            <person name="Bienvenut W.V."/>
        </authorList>
    </citation>
    <scope>PROTEIN SEQUENCE OF 35-67; 76-100; 255-263; 286-298; 310-327; 358-371; 418-427; 436-453; 470-480 AND 688-697</scope>
    <scope>IDENTIFICATION BY MASS SPECTROMETRY</scope>
</reference>
<reference key="3">
    <citation type="journal article" date="1994" name="Genetics">
        <title>Multiple chemosensory defects in daf-11 and daf-21 mutants of Caenorhabditis elegans.</title>
        <authorList>
            <person name="Vowels J.J."/>
            <person name="Thomas J.H."/>
        </authorList>
    </citation>
    <scope>FUNCTION</scope>
</reference>
<reference key="4">
    <citation type="journal article" date="2000" name="Genetics">
        <title>A transmembrane guanylyl cyclase (DAF-11) and Hsp90 (DAF-21) regulate a common set of chemosensory behaviors in Caenorhabditis elegans.</title>
        <authorList>
            <person name="Birnby D.A."/>
            <person name="Link E.M."/>
            <person name="Vowels J.J."/>
            <person name="Tian H."/>
            <person name="Colacurcio P.L."/>
            <person name="Thomas J.H."/>
        </authorList>
    </citation>
    <scope>FUNCTION</scope>
    <scope>DEVELOPMENTAL STAGE</scope>
    <scope>MUTAGENESIS OF GLU-292</scope>
</reference>
<reference key="5">
    <citation type="journal article" date="2003" name="Dev. Growth Differ.">
        <title>Caenorhabditis elegans DAF-21 (HSP90) is characteristically and predominantly expressed in germline cells: spatial and temporal analysis.</title>
        <authorList>
            <person name="Inoue T."/>
            <person name="Takamura K."/>
            <person name="Yamae H."/>
            <person name="Ise N."/>
            <person name="Kawakami M."/>
            <person name="Tabuse Y."/>
            <person name="Miwa J."/>
            <person name="Yamaguchi Y."/>
        </authorList>
    </citation>
    <scope>SUBCELLULAR LOCATION</scope>
    <scope>TISSUE SPECIFICITY</scope>
</reference>
<reference key="6">
    <citation type="journal article" date="2006" name="Dev. Growth Differ.">
        <title>Cell cycle control by daf-21/Hsp90 at the first meiotic prophase/metaphase boundary during oogenesis in Caenorhabditis elegans.</title>
        <authorList>
            <person name="Inoue T."/>
            <person name="Hirata K."/>
            <person name="Kuwana Y."/>
            <person name="Fujita M."/>
            <person name="Miwa J."/>
            <person name="Roy R."/>
            <person name="Yamaguchi Y."/>
        </authorList>
    </citation>
    <scope>FUNCTION</scope>
</reference>
<reference key="7">
    <citation type="journal article" date="2013" name="Exp. Cell Res.">
        <title>Yes-associated protein homolog, YAP-1, is involved in the thermotolerance and aging in the nematode Caenorhabditis elegans.</title>
        <authorList>
            <person name="Iwasa H."/>
            <person name="Maimaiti S."/>
            <person name="Kuroyanagi H."/>
            <person name="Kawano S."/>
            <person name="Inami K."/>
            <person name="Timalsina S."/>
            <person name="Ikeda M."/>
            <person name="Nakagawa K."/>
            <person name="Hata Y."/>
        </authorList>
    </citation>
    <scope>FUNCTION</scope>
</reference>
<reference key="8">
    <citation type="journal article" date="2013" name="J. Biol. Chem.">
        <title>Cdc37 (cell division cycle 37) restricts Hsp90 (heat shock protein 90) motility by interaction with N-terminal and middle domain binding sites.</title>
        <authorList>
            <person name="Eckl J.M."/>
            <person name="Rutz D.A."/>
            <person name="Haslbeck V."/>
            <person name="Zierer B.K."/>
            <person name="Reinstein J."/>
            <person name="Richter K."/>
        </authorList>
    </citation>
    <scope>INTERACTION WITH CDC-37</scope>
</reference>
<reference key="9">
    <citation type="journal article" date="2015" name="Sci. Rep.">
        <title>The activity of protein phosphatase 5 towards native clients is modulated by the middle- and C-terminal domains of Hsp90.</title>
        <authorList>
            <person name="Haslbeck V."/>
            <person name="Eckl J.M."/>
            <person name="Drazic A."/>
            <person name="Rutz D.A."/>
            <person name="Lorenz O.R."/>
            <person name="Zimmermann K."/>
            <person name="Kriehuber T."/>
            <person name="Lindemann C."/>
            <person name="Madl T."/>
            <person name="Richter K."/>
        </authorList>
    </citation>
    <scope>SUBUNIT</scope>
    <scope>INTERACTION WITH PPH-5</scope>
</reference>
<reference key="10">
    <citation type="journal article" date="2018" name="Cell Rep.">
        <title>A PQM-1-Mediated Response Triggers Transcellular Chaperone Signaling and Regulates Organismal Proteostasis.</title>
        <authorList>
            <person name="O'Brien D."/>
            <person name="Jones L.M."/>
            <person name="Good S."/>
            <person name="Miles J."/>
            <person name="Vijayabaskar M.S."/>
            <person name="Aston R."/>
            <person name="Smith C.E."/>
            <person name="Westhead D.R."/>
            <person name="van Oosten-Hawle P."/>
        </authorList>
    </citation>
    <scope>FUNCTION</scope>
    <scope>INDUCTION</scope>
</reference>
<proteinExistence type="evidence at protein level"/>
<sequence length="702" mass="80283">MSENAETFAFQAEIAQLMSLIINTFYSNKEIYLRELISNASDALDKIRYQALTEPSELDTGKELFIKITPNKEEKTLTIMDTGIGMTKADLVNNLGTIAKSGTKAFMEALQAGADISMIGQFGVGFYSAFLVADKVVVTSKNNDDDSYQWESSAGGSFVVRPFNDPEVTRGTKIVMHIKEDQIDFLEERKIKEIVKKHSQFIGYPIKLVVEKEREKEVEDEEAVEAKDEEKKEGEVENVADDADKKKTKKIKEKYFEDEELNKTKPIWTRNPDDISNEEYAEFYKSLSNDWEDHLAVKHFSVEGQLEFRALLFVPQRAPFDLFENKKSKNSIKLYVRRVFIMENCEELMPEYLNFIKGVVDSEDLPLNISREMLQQSKILKVIRKNLVKKCMELIDEVAEDKDNFKKFYEQFGKNLKLGIHEDSTNRKKLSDFLRYSTSAGDEPTSLKEYVSRMKENQTQIYYITGESKDVVAASAFVERVKSRGFEVLYMCDPIDEYCVQQLKEYDGKKLVSVTKEGLELPETEEEKKKFEEDKVAYENLCKVIKDILEKKVEKVGVSNRLVSSPCCIVTSEYGWSANMERIMKAQALRDSSTMGYMAAKKHLEINPDHAIMKTLRDRVEVDKNDKTVKDLVVLLFETALLASGFSLEEPQSHASRIYRMIKLGLDIGDDEIEDSAVPSSCTAEAKIEGAEEDASRMEEVD</sequence>
<keyword id="KW-0002">3D-structure</keyword>
<keyword id="KW-0067">ATP-binding</keyword>
<keyword id="KW-0131">Cell cycle</keyword>
<keyword id="KW-0143">Chaperone</keyword>
<keyword id="KW-0963">Cytoplasm</keyword>
<keyword id="KW-0903">Direct protein sequencing</keyword>
<keyword id="KW-0547">Nucleotide-binding</keyword>
<keyword id="KW-1185">Reference proteome</keyword>
<keyword id="KW-0346">Stress response</keyword>